<gene>
    <name type="ordered locus">MM_0462</name>
</gene>
<protein>
    <recommendedName>
        <fullName>Putative ABC transporter ATP-binding protein MM_0462</fullName>
        <ecNumber>7.-.-.-</ecNumber>
    </recommendedName>
</protein>
<organism>
    <name type="scientific">Methanosarcina mazei (strain ATCC BAA-159 / DSM 3647 / Goe1 / Go1 / JCM 11833 / OCM 88)</name>
    <name type="common">Methanosarcina frisia</name>
    <dbReference type="NCBI Taxonomy" id="192952"/>
    <lineage>
        <taxon>Archaea</taxon>
        <taxon>Methanobacteriati</taxon>
        <taxon>Methanobacteriota</taxon>
        <taxon>Stenosarchaea group</taxon>
        <taxon>Methanomicrobia</taxon>
        <taxon>Methanosarcinales</taxon>
        <taxon>Methanosarcinaceae</taxon>
        <taxon>Methanosarcina</taxon>
    </lineage>
</organism>
<keyword id="KW-0067">ATP-binding</keyword>
<keyword id="KW-1003">Cell membrane</keyword>
<keyword id="KW-0472">Membrane</keyword>
<keyword id="KW-0547">Nucleotide-binding</keyword>
<keyword id="KW-1278">Translocase</keyword>
<keyword id="KW-0813">Transport</keyword>
<evidence type="ECO:0000250" key="1"/>
<evidence type="ECO:0000255" key="2">
    <source>
        <dbReference type="PROSITE-ProRule" id="PRU00434"/>
    </source>
</evidence>
<evidence type="ECO:0000305" key="3"/>
<comment type="function">
    <text evidence="1">Probably part of an ABC transporter complex. Responsible for energy coupling to the transport system (By similarity).</text>
</comment>
<comment type="subcellular location">
    <subcellularLocation>
        <location evidence="1">Cell membrane</location>
        <topology evidence="1">Peripheral membrane protein</topology>
    </subcellularLocation>
</comment>
<comment type="similarity">
    <text evidence="3">Belongs to the ABC transporter superfamily.</text>
</comment>
<comment type="sequence caution" evidence="3">
    <conflict type="erroneous initiation">
        <sequence resource="EMBL-CDS" id="AAM30158"/>
    </conflict>
</comment>
<accession>Q8PZN0</accession>
<feature type="chain" id="PRO_0000092146" description="Putative ABC transporter ATP-binding protein MM_0462">
    <location>
        <begin position="1"/>
        <end position="453"/>
    </location>
</feature>
<feature type="domain" description="ABC transporter" evidence="2">
    <location>
        <begin position="4"/>
        <end position="239"/>
    </location>
</feature>
<feature type="binding site" evidence="2">
    <location>
        <begin position="37"/>
        <end position="44"/>
    </location>
    <ligand>
        <name>ATP</name>
        <dbReference type="ChEBI" id="CHEBI:30616"/>
    </ligand>
</feature>
<sequence length="453" mass="50024">MIILETRSLKYSYPDGTAAVQDINIEIKKGKKVAFVGQNGSGKSTLFLLLNGTLKPQEGEILFHGVPFKYDSKSLREIRKSVGIVFQNSDDQIFAPTVYQDVAFGPANLGYSKERVDACVQSALEYVGLIRLKDRPPHHLSGGQKKRVAIAGVMAMEPEVIILDEPLSNLDPVGADEIMDLLNEFNHFGSTIIISTHDVDLAYRWSDYVFLMSNSKLIGQGTPAEVFKEQELLKKVGLRQPTTLEIYHEIERRGLAYGRNSPKTIPDLVNTLKPLDLMWVDVAPGVREGDNLNIGVMYGEYATQSPYEAINATVLHIHPNGRAIVELKRKGIKAGGVLLYDTDKYSPDEVRQIIKEGEIAFVGAMGKKSKTLAEQDGIRLDVTSGVIDKSILMALCGKRCLILTAGGMVDHALKRTREYVDKSGIEFTVGVVNRDGGCKWLEETEGSPEKLKT</sequence>
<name>Y462_METMA</name>
<proteinExistence type="inferred from homology"/>
<dbReference type="EC" id="7.-.-.-"/>
<dbReference type="EMBL" id="AE008384">
    <property type="protein sequence ID" value="AAM30158.1"/>
    <property type="status" value="ALT_INIT"/>
    <property type="molecule type" value="Genomic_DNA"/>
</dbReference>
<dbReference type="RefSeq" id="WP_048045849.1">
    <property type="nucleotide sequence ID" value="NC_003901.1"/>
</dbReference>
<dbReference type="SMR" id="Q8PZN0"/>
<dbReference type="GeneID" id="1478804"/>
<dbReference type="KEGG" id="mma:MM_0462"/>
<dbReference type="PATRIC" id="fig|192952.21.peg.557"/>
<dbReference type="eggNOG" id="arCOG00203">
    <property type="taxonomic scope" value="Archaea"/>
</dbReference>
<dbReference type="HOGENOM" id="CLU_000604_13_0_2"/>
<dbReference type="Proteomes" id="UP000000595">
    <property type="component" value="Chromosome"/>
</dbReference>
<dbReference type="GO" id="GO:0043190">
    <property type="term" value="C:ATP-binding cassette (ABC) transporter complex"/>
    <property type="evidence" value="ECO:0007669"/>
    <property type="project" value="TreeGrafter"/>
</dbReference>
<dbReference type="GO" id="GO:0005524">
    <property type="term" value="F:ATP binding"/>
    <property type="evidence" value="ECO:0007669"/>
    <property type="project" value="UniProtKB-KW"/>
</dbReference>
<dbReference type="GO" id="GO:0016887">
    <property type="term" value="F:ATP hydrolysis activity"/>
    <property type="evidence" value="ECO:0007669"/>
    <property type="project" value="InterPro"/>
</dbReference>
<dbReference type="GO" id="GO:0042626">
    <property type="term" value="F:ATPase-coupled transmembrane transporter activity"/>
    <property type="evidence" value="ECO:0007669"/>
    <property type="project" value="TreeGrafter"/>
</dbReference>
<dbReference type="GO" id="GO:0006824">
    <property type="term" value="P:cobalt ion transport"/>
    <property type="evidence" value="ECO:0007669"/>
    <property type="project" value="InterPro"/>
</dbReference>
<dbReference type="CDD" id="cd03225">
    <property type="entry name" value="ABC_cobalt_CbiO_domain1"/>
    <property type="match status" value="1"/>
</dbReference>
<dbReference type="FunFam" id="3.40.50.300:FF:000224">
    <property type="entry name" value="Energy-coupling factor transporter ATP-binding protein EcfA"/>
    <property type="match status" value="1"/>
</dbReference>
<dbReference type="Gene3D" id="3.40.50.300">
    <property type="entry name" value="P-loop containing nucleotide triphosphate hydrolases"/>
    <property type="match status" value="1"/>
</dbReference>
<dbReference type="InterPro" id="IPR003593">
    <property type="entry name" value="AAA+_ATPase"/>
</dbReference>
<dbReference type="InterPro" id="IPR003439">
    <property type="entry name" value="ABC_transporter-like_ATP-bd"/>
</dbReference>
<dbReference type="InterPro" id="IPR017871">
    <property type="entry name" value="ABC_transporter-like_CS"/>
</dbReference>
<dbReference type="InterPro" id="IPR015856">
    <property type="entry name" value="ABC_transpr_CbiO/EcfA_su"/>
</dbReference>
<dbReference type="InterPro" id="IPR005876">
    <property type="entry name" value="Co_trans_ATP-bd"/>
</dbReference>
<dbReference type="InterPro" id="IPR050095">
    <property type="entry name" value="ECF_ABC_transporter_ATP-bd"/>
</dbReference>
<dbReference type="InterPro" id="IPR027417">
    <property type="entry name" value="P-loop_NTPase"/>
</dbReference>
<dbReference type="NCBIfam" id="TIGR01166">
    <property type="entry name" value="cbiO"/>
    <property type="match status" value="1"/>
</dbReference>
<dbReference type="PANTHER" id="PTHR43553:SF24">
    <property type="entry name" value="ENERGY-COUPLING FACTOR TRANSPORTER ATP-BINDING PROTEIN ECFA1"/>
    <property type="match status" value="1"/>
</dbReference>
<dbReference type="PANTHER" id="PTHR43553">
    <property type="entry name" value="HEAVY METAL TRANSPORTER"/>
    <property type="match status" value="1"/>
</dbReference>
<dbReference type="Pfam" id="PF00005">
    <property type="entry name" value="ABC_tran"/>
    <property type="match status" value="1"/>
</dbReference>
<dbReference type="SMART" id="SM00382">
    <property type="entry name" value="AAA"/>
    <property type="match status" value="1"/>
</dbReference>
<dbReference type="SUPFAM" id="SSF52540">
    <property type="entry name" value="P-loop containing nucleoside triphosphate hydrolases"/>
    <property type="match status" value="1"/>
</dbReference>
<dbReference type="PROSITE" id="PS00211">
    <property type="entry name" value="ABC_TRANSPORTER_1"/>
    <property type="match status" value="1"/>
</dbReference>
<dbReference type="PROSITE" id="PS50893">
    <property type="entry name" value="ABC_TRANSPORTER_2"/>
    <property type="match status" value="1"/>
</dbReference>
<reference key="1">
    <citation type="journal article" date="2002" name="J. Mol. Microbiol. Biotechnol.">
        <title>The genome of Methanosarcina mazei: evidence for lateral gene transfer between Bacteria and Archaea.</title>
        <authorList>
            <person name="Deppenmeier U."/>
            <person name="Johann A."/>
            <person name="Hartsch T."/>
            <person name="Merkl R."/>
            <person name="Schmitz R.A."/>
            <person name="Martinez-Arias R."/>
            <person name="Henne A."/>
            <person name="Wiezer A."/>
            <person name="Baeumer S."/>
            <person name="Jacobi C."/>
            <person name="Brueggemann H."/>
            <person name="Lienard T."/>
            <person name="Christmann A."/>
            <person name="Boemecke M."/>
            <person name="Steckel S."/>
            <person name="Bhattacharyya A."/>
            <person name="Lykidis A."/>
            <person name="Overbeek R."/>
            <person name="Klenk H.-P."/>
            <person name="Gunsalus R.P."/>
            <person name="Fritz H.-J."/>
            <person name="Gottschalk G."/>
        </authorList>
    </citation>
    <scope>NUCLEOTIDE SEQUENCE [LARGE SCALE GENOMIC DNA]</scope>
    <source>
        <strain>ATCC BAA-159 / DSM 3647 / Goe1 / Go1 / JCM 11833 / OCM 88</strain>
    </source>
</reference>